<name>RHMD_BURA4</name>
<comment type="function">
    <text evidence="1">Catalyzes the dehydration of L-rhamnonate to 2-keto-3-deoxy-L-rhamnonate (KDR).</text>
</comment>
<comment type="catalytic activity">
    <reaction evidence="1">
        <text>L-rhamnonate = 2-dehydro-3-deoxy-L-rhamnonate + H2O</text>
        <dbReference type="Rhea" id="RHEA:23080"/>
        <dbReference type="ChEBI" id="CHEBI:15377"/>
        <dbReference type="ChEBI" id="CHEBI:58118"/>
        <dbReference type="ChEBI" id="CHEBI:58371"/>
        <dbReference type="EC" id="4.2.1.90"/>
    </reaction>
</comment>
<comment type="cofactor">
    <cofactor evidence="1">
        <name>Mg(2+)</name>
        <dbReference type="ChEBI" id="CHEBI:18420"/>
    </cofactor>
    <text evidence="1">Binds 1 Mg(2+) ion per subunit.</text>
</comment>
<comment type="subunit">
    <text evidence="1">Homooctamer; tetramer of dimers.</text>
</comment>
<comment type="miscellaneous">
    <text evidence="1">Reaction proceeds via a syn dehydration.</text>
</comment>
<comment type="similarity">
    <text evidence="1">Belongs to the mandelate racemase/muconate lactonizing enzyme family. RhamD subfamily.</text>
</comment>
<proteinExistence type="inferred from homology"/>
<keyword id="KW-0456">Lyase</keyword>
<keyword id="KW-0460">Magnesium</keyword>
<keyword id="KW-0479">Metal-binding</keyword>
<sequence length="392" mass="44064">MAMPTIKHVRAFTVRGGGADYHDQDDGHWIDDHIATPMSRYPEYRESRRSFGINVLGTLVVEIEASDGSVGFAVTTGGEIGAFIVERHLARFLEGRCVTDIETMWDQMYYATLYYGRKGVVLNTISGVDLALWDLLGKVRGEPVYQLLGGPVRDELVFYATGARPDLAKQMGFIGGKLPLQHGPAENEEGLRKNLEKLADMRNRVGDDFWLMFDCWMSLDVRYATRLANAAHEYGLKWIEECLPPDDYWGYADLRRNVPRGMMVSTGEHEATRWGFRMLLEMGCCDLIQPDVGWCGGITELIKISALADAHNVMVVPHGSSVYSYHFVVTRHNSPFAEFLMMAPKADEVVPMFTPLLLDEPVPVNGRMKVPDRPGFGVRLNPECALVRPYTH</sequence>
<organism>
    <name type="scientific">Burkholderia ambifaria (strain MC40-6)</name>
    <dbReference type="NCBI Taxonomy" id="398577"/>
    <lineage>
        <taxon>Bacteria</taxon>
        <taxon>Pseudomonadati</taxon>
        <taxon>Pseudomonadota</taxon>
        <taxon>Betaproteobacteria</taxon>
        <taxon>Burkholderiales</taxon>
        <taxon>Burkholderiaceae</taxon>
        <taxon>Burkholderia</taxon>
        <taxon>Burkholderia cepacia complex</taxon>
    </lineage>
</organism>
<accession>B1YMY4</accession>
<dbReference type="EC" id="4.2.1.90" evidence="1"/>
<dbReference type="EMBL" id="CP001025">
    <property type="protein sequence ID" value="ACB63698.1"/>
    <property type="molecule type" value="Genomic_DNA"/>
</dbReference>
<dbReference type="RefSeq" id="WP_012363567.1">
    <property type="nucleotide sequence ID" value="NC_010551.1"/>
</dbReference>
<dbReference type="SMR" id="B1YMY4"/>
<dbReference type="KEGG" id="bac:BamMC406_1207"/>
<dbReference type="HOGENOM" id="CLU_030273_1_0_4"/>
<dbReference type="OrthoDB" id="103536at2"/>
<dbReference type="Proteomes" id="UP000001680">
    <property type="component" value="Chromosome 1"/>
</dbReference>
<dbReference type="GO" id="GO:0050032">
    <property type="term" value="F:L-rhamnonate dehydratase activity"/>
    <property type="evidence" value="ECO:0007669"/>
    <property type="project" value="UniProtKB-UniRule"/>
</dbReference>
<dbReference type="GO" id="GO:0000287">
    <property type="term" value="F:magnesium ion binding"/>
    <property type="evidence" value="ECO:0007669"/>
    <property type="project" value="UniProtKB-UniRule"/>
</dbReference>
<dbReference type="GO" id="GO:0009063">
    <property type="term" value="P:amino acid catabolic process"/>
    <property type="evidence" value="ECO:0007669"/>
    <property type="project" value="InterPro"/>
</dbReference>
<dbReference type="GO" id="GO:0016052">
    <property type="term" value="P:carbohydrate catabolic process"/>
    <property type="evidence" value="ECO:0007669"/>
    <property type="project" value="TreeGrafter"/>
</dbReference>
<dbReference type="CDD" id="cd03327">
    <property type="entry name" value="MR_like_2"/>
    <property type="match status" value="1"/>
</dbReference>
<dbReference type="FunFam" id="3.20.20.120:FF:000005">
    <property type="entry name" value="Putative L-rhamnonate dehydratase"/>
    <property type="match status" value="1"/>
</dbReference>
<dbReference type="Gene3D" id="3.20.20.120">
    <property type="entry name" value="Enolase-like C-terminal domain"/>
    <property type="match status" value="1"/>
</dbReference>
<dbReference type="Gene3D" id="3.30.390.10">
    <property type="entry name" value="Enolase-like, N-terminal domain"/>
    <property type="match status" value="1"/>
</dbReference>
<dbReference type="HAMAP" id="MF_01288">
    <property type="entry name" value="Rhamnon_dehydrat"/>
    <property type="match status" value="1"/>
</dbReference>
<dbReference type="InterPro" id="IPR036849">
    <property type="entry name" value="Enolase-like_C_sf"/>
</dbReference>
<dbReference type="InterPro" id="IPR029017">
    <property type="entry name" value="Enolase-like_N"/>
</dbReference>
<dbReference type="InterPro" id="IPR029065">
    <property type="entry name" value="Enolase_C-like"/>
</dbReference>
<dbReference type="InterPro" id="IPR023444">
    <property type="entry name" value="L-Rhamnon_dehydrat"/>
</dbReference>
<dbReference type="InterPro" id="IPR018110">
    <property type="entry name" value="Mandel_Rmase/mucon_lact_enz_CS"/>
</dbReference>
<dbReference type="InterPro" id="IPR013342">
    <property type="entry name" value="Mandelate_racemase_C"/>
</dbReference>
<dbReference type="InterPro" id="IPR013341">
    <property type="entry name" value="Mandelate_racemase_N_dom"/>
</dbReference>
<dbReference type="InterPro" id="IPR046945">
    <property type="entry name" value="RHMD-like"/>
</dbReference>
<dbReference type="NCBIfam" id="NF011968">
    <property type="entry name" value="PRK15440.1"/>
    <property type="match status" value="1"/>
</dbReference>
<dbReference type="PANTHER" id="PTHR13794">
    <property type="entry name" value="ENOLASE SUPERFAMILY, MANDELATE RACEMASE"/>
    <property type="match status" value="1"/>
</dbReference>
<dbReference type="PANTHER" id="PTHR13794:SF58">
    <property type="entry name" value="MITOCHONDRIAL ENOLASE SUPERFAMILY MEMBER 1"/>
    <property type="match status" value="1"/>
</dbReference>
<dbReference type="Pfam" id="PF13378">
    <property type="entry name" value="MR_MLE_C"/>
    <property type="match status" value="1"/>
</dbReference>
<dbReference type="Pfam" id="PF02746">
    <property type="entry name" value="MR_MLE_N"/>
    <property type="match status" value="1"/>
</dbReference>
<dbReference type="SFLD" id="SFLDG00179">
    <property type="entry name" value="mandelate_racemase"/>
    <property type="match status" value="1"/>
</dbReference>
<dbReference type="SFLD" id="SFLDF00006">
    <property type="entry name" value="rhamnonate_dehydratase"/>
    <property type="match status" value="1"/>
</dbReference>
<dbReference type="SMART" id="SM00922">
    <property type="entry name" value="MR_MLE"/>
    <property type="match status" value="1"/>
</dbReference>
<dbReference type="SUPFAM" id="SSF51604">
    <property type="entry name" value="Enolase C-terminal domain-like"/>
    <property type="match status" value="1"/>
</dbReference>
<dbReference type="SUPFAM" id="SSF54826">
    <property type="entry name" value="Enolase N-terminal domain-like"/>
    <property type="match status" value="1"/>
</dbReference>
<dbReference type="PROSITE" id="PS00908">
    <property type="entry name" value="MR_MLE_1"/>
    <property type="match status" value="1"/>
</dbReference>
<gene>
    <name evidence="1" type="primary">rhmD</name>
    <name type="ordered locus">BamMC406_1207</name>
</gene>
<protein>
    <recommendedName>
        <fullName evidence="1">L-rhamnonate dehydratase</fullName>
        <shortName evidence="1">RhamD</shortName>
        <ecNumber evidence="1">4.2.1.90</ecNumber>
    </recommendedName>
</protein>
<reference key="1">
    <citation type="submission" date="2008-04" db="EMBL/GenBank/DDBJ databases">
        <title>Complete sequence of chromosome 1 of Burkholderia ambifaria MC40-6.</title>
        <authorList>
            <person name="Copeland A."/>
            <person name="Lucas S."/>
            <person name="Lapidus A."/>
            <person name="Glavina del Rio T."/>
            <person name="Dalin E."/>
            <person name="Tice H."/>
            <person name="Pitluck S."/>
            <person name="Chain P."/>
            <person name="Malfatti S."/>
            <person name="Shin M."/>
            <person name="Vergez L."/>
            <person name="Lang D."/>
            <person name="Schmutz J."/>
            <person name="Larimer F."/>
            <person name="Land M."/>
            <person name="Hauser L."/>
            <person name="Kyrpides N."/>
            <person name="Lykidis A."/>
            <person name="Ramette A."/>
            <person name="Konstantinidis K."/>
            <person name="Tiedje J."/>
            <person name="Richardson P."/>
        </authorList>
    </citation>
    <scope>NUCLEOTIDE SEQUENCE [LARGE SCALE GENOMIC DNA]</scope>
    <source>
        <strain>MC40-6</strain>
    </source>
</reference>
<evidence type="ECO:0000255" key="1">
    <source>
        <dbReference type="HAMAP-Rule" id="MF_01288"/>
    </source>
</evidence>
<feature type="chain" id="PRO_0000351683" description="L-rhamnonate dehydratase">
    <location>
        <begin position="1"/>
        <end position="392"/>
    </location>
</feature>
<feature type="active site" description="Proton acceptor" evidence="1">
    <location>
        <position position="318"/>
    </location>
</feature>
<feature type="binding site" evidence="1">
    <location>
        <position position="22"/>
    </location>
    <ligand>
        <name>substrate</name>
    </ligand>
</feature>
<feature type="binding site" evidence="1">
    <location>
        <position position="48"/>
    </location>
    <ligand>
        <name>substrate</name>
    </ligand>
</feature>
<feature type="binding site" evidence="1">
    <location>
        <position position="214"/>
    </location>
    <ligand>
        <name>Mg(2+)</name>
        <dbReference type="ChEBI" id="CHEBI:18420"/>
    </ligand>
</feature>
<feature type="binding site" evidence="1">
    <location>
        <position position="240"/>
    </location>
    <ligand>
        <name>Mg(2+)</name>
        <dbReference type="ChEBI" id="CHEBI:18420"/>
    </ligand>
</feature>
<feature type="binding site" evidence="1">
    <location>
        <position position="268"/>
    </location>
    <ligand>
        <name>Mg(2+)</name>
        <dbReference type="ChEBI" id="CHEBI:18420"/>
    </ligand>
</feature>
<feature type="binding site" evidence="1">
    <location>
        <position position="338"/>
    </location>
    <ligand>
        <name>substrate</name>
    </ligand>
</feature>
<feature type="site" description="Increases basicity of active site His" evidence="1">
    <location>
        <position position="291"/>
    </location>
</feature>
<feature type="site" description="Transition state stabilizer" evidence="1">
    <location>
        <position position="338"/>
    </location>
</feature>